<reference key="1">
    <citation type="journal article" date="2001" name="Nature">
        <title>Massive gene decay in the leprosy bacillus.</title>
        <authorList>
            <person name="Cole S.T."/>
            <person name="Eiglmeier K."/>
            <person name="Parkhill J."/>
            <person name="James K.D."/>
            <person name="Thomson N.R."/>
            <person name="Wheeler P.R."/>
            <person name="Honore N."/>
            <person name="Garnier T."/>
            <person name="Churcher C.M."/>
            <person name="Harris D.E."/>
            <person name="Mungall K.L."/>
            <person name="Basham D."/>
            <person name="Brown D."/>
            <person name="Chillingworth T."/>
            <person name="Connor R."/>
            <person name="Davies R.M."/>
            <person name="Devlin K."/>
            <person name="Duthoy S."/>
            <person name="Feltwell T."/>
            <person name="Fraser A."/>
            <person name="Hamlin N."/>
            <person name="Holroyd S."/>
            <person name="Hornsby T."/>
            <person name="Jagels K."/>
            <person name="Lacroix C."/>
            <person name="Maclean J."/>
            <person name="Moule S."/>
            <person name="Murphy L.D."/>
            <person name="Oliver K."/>
            <person name="Quail M.A."/>
            <person name="Rajandream M.A."/>
            <person name="Rutherford K.M."/>
            <person name="Rutter S."/>
            <person name="Seeger K."/>
            <person name="Simon S."/>
            <person name="Simmonds M."/>
            <person name="Skelton J."/>
            <person name="Squares R."/>
            <person name="Squares S."/>
            <person name="Stevens K."/>
            <person name="Taylor K."/>
            <person name="Whitehead S."/>
            <person name="Woodward J.R."/>
            <person name="Barrell B.G."/>
        </authorList>
    </citation>
    <scope>NUCLEOTIDE SEQUENCE [LARGE SCALE GENOMIC DNA]</scope>
    <source>
        <strain>TN</strain>
    </source>
</reference>
<sequence length="502" mass="55305">MTAVTSDGTPQAAKVRVRFCPSPTGVPHVGMVRTALFNWAYARHTGGTFVLRIEDTDADRDSEESYLALLDALRWLGLNWDEGPEVGGPYGPYRQSQRTDIYREVVAKLLATGEAYYAFSTPEEVENRHLAAGRNPKLGYDNFDRDLTDAQFSAYLAEGRKPVVRLRMPDEDISWDDLVRGTTTFAVGTVPDYVLTRASGDPLYTLVNPCDDALMKITHVLRGEDLLSSTPRQVALYQALIRIGMAERIPEFGHFPSVLGEGTKKLSKREPQSNLFAHRDRGFIPEGLLNYLALLGWAIADDHDLFSLDEMVAAFDVVDVNSNPARFDQKKADAVNAEHIRMLDSEDFAGRLRDYFTTHGYHIALDPANYEAGFVAAAQLVQTRIVVLGDAWDLLKFLNDDEYSIDSKAAAKELDADAGPVLDVACAVLDSLVDWTTASIEDVLKVALIEGLGLKPRKVFGPIRVAATGALVSPPLFESLELLGRARSLQRLSAARARVTSA</sequence>
<evidence type="ECO:0000255" key="1">
    <source>
        <dbReference type="HAMAP-Rule" id="MF_00022"/>
    </source>
</evidence>
<name>SYE_MYCLE</name>
<gene>
    <name evidence="1" type="primary">gltX</name>
    <name type="synonym">gltS</name>
    <name type="ordered locus">ML1688</name>
    <name type="ORF">MLCB637.29</name>
</gene>
<comment type="function">
    <text evidence="1">Catalyzes the attachment of glutamate to tRNA(Glu) in a two-step reaction: glutamate is first activated by ATP to form Glu-AMP and then transferred to the acceptor end of tRNA(Glu).</text>
</comment>
<comment type="catalytic activity">
    <reaction evidence="1">
        <text>tRNA(Glu) + L-glutamate + ATP = L-glutamyl-tRNA(Glu) + AMP + diphosphate</text>
        <dbReference type="Rhea" id="RHEA:23540"/>
        <dbReference type="Rhea" id="RHEA-COMP:9663"/>
        <dbReference type="Rhea" id="RHEA-COMP:9680"/>
        <dbReference type="ChEBI" id="CHEBI:29985"/>
        <dbReference type="ChEBI" id="CHEBI:30616"/>
        <dbReference type="ChEBI" id="CHEBI:33019"/>
        <dbReference type="ChEBI" id="CHEBI:78442"/>
        <dbReference type="ChEBI" id="CHEBI:78520"/>
        <dbReference type="ChEBI" id="CHEBI:456215"/>
        <dbReference type="EC" id="6.1.1.17"/>
    </reaction>
</comment>
<comment type="subunit">
    <text evidence="1">Monomer.</text>
</comment>
<comment type="subcellular location">
    <subcellularLocation>
        <location evidence="1">Cytoplasm</location>
    </subcellularLocation>
</comment>
<comment type="similarity">
    <text evidence="1">Belongs to the class-I aminoacyl-tRNA synthetase family. Glutamate--tRNA ligase type 1 subfamily.</text>
</comment>
<keyword id="KW-0030">Aminoacyl-tRNA synthetase</keyword>
<keyword id="KW-0067">ATP-binding</keyword>
<keyword id="KW-0963">Cytoplasm</keyword>
<keyword id="KW-0436">Ligase</keyword>
<keyword id="KW-0547">Nucleotide-binding</keyword>
<keyword id="KW-0648">Protein biosynthesis</keyword>
<keyword id="KW-1185">Reference proteome</keyword>
<accession>O33120</accession>
<protein>
    <recommendedName>
        <fullName evidence="1">Glutamate--tRNA ligase</fullName>
        <ecNumber evidence="1">6.1.1.17</ecNumber>
    </recommendedName>
    <alternativeName>
        <fullName evidence="1">Glutamyl-tRNA synthetase</fullName>
        <shortName evidence="1">GluRS</shortName>
    </alternativeName>
</protein>
<proteinExistence type="inferred from homology"/>
<feature type="chain" id="PRO_0000119603" description="Glutamate--tRNA ligase">
    <location>
        <begin position="1"/>
        <end position="502"/>
    </location>
</feature>
<feature type="short sequence motif" description="'HIGH' region" evidence="1">
    <location>
        <begin position="21"/>
        <end position="31"/>
    </location>
</feature>
<feature type="short sequence motif" description="'KMSKS' region" evidence="1">
    <location>
        <begin position="265"/>
        <end position="269"/>
    </location>
</feature>
<feature type="binding site" evidence="1">
    <location>
        <position position="268"/>
    </location>
    <ligand>
        <name>ATP</name>
        <dbReference type="ChEBI" id="CHEBI:30616"/>
    </ligand>
</feature>
<organism>
    <name type="scientific">Mycobacterium leprae (strain TN)</name>
    <dbReference type="NCBI Taxonomy" id="272631"/>
    <lineage>
        <taxon>Bacteria</taxon>
        <taxon>Bacillati</taxon>
        <taxon>Actinomycetota</taxon>
        <taxon>Actinomycetes</taxon>
        <taxon>Mycobacteriales</taxon>
        <taxon>Mycobacteriaceae</taxon>
        <taxon>Mycobacterium</taxon>
    </lineage>
</organism>
<dbReference type="EC" id="6.1.1.17" evidence="1"/>
<dbReference type="EMBL" id="Z99263">
    <property type="protein sequence ID" value="CAB16444.1"/>
    <property type="molecule type" value="Genomic_DNA"/>
</dbReference>
<dbReference type="EMBL" id="AL583923">
    <property type="protein sequence ID" value="CAC30641.1"/>
    <property type="molecule type" value="Genomic_DNA"/>
</dbReference>
<dbReference type="PIR" id="T45422">
    <property type="entry name" value="T45422"/>
</dbReference>
<dbReference type="RefSeq" id="NP_302160.1">
    <property type="nucleotide sequence ID" value="NC_002677.1"/>
</dbReference>
<dbReference type="RefSeq" id="WP_010908481.1">
    <property type="nucleotide sequence ID" value="NC_002677.1"/>
</dbReference>
<dbReference type="SMR" id="O33120"/>
<dbReference type="STRING" id="272631.gene:17575533"/>
<dbReference type="KEGG" id="mle:ML1688"/>
<dbReference type="PATRIC" id="fig|272631.5.peg.3182"/>
<dbReference type="Leproma" id="ML1688"/>
<dbReference type="eggNOG" id="COG0008">
    <property type="taxonomic scope" value="Bacteria"/>
</dbReference>
<dbReference type="HOGENOM" id="CLU_015768_6_1_11"/>
<dbReference type="OrthoDB" id="9807503at2"/>
<dbReference type="Proteomes" id="UP000000806">
    <property type="component" value="Chromosome"/>
</dbReference>
<dbReference type="GO" id="GO:0005829">
    <property type="term" value="C:cytosol"/>
    <property type="evidence" value="ECO:0007669"/>
    <property type="project" value="TreeGrafter"/>
</dbReference>
<dbReference type="GO" id="GO:0005524">
    <property type="term" value="F:ATP binding"/>
    <property type="evidence" value="ECO:0007669"/>
    <property type="project" value="UniProtKB-UniRule"/>
</dbReference>
<dbReference type="GO" id="GO:0004818">
    <property type="term" value="F:glutamate-tRNA ligase activity"/>
    <property type="evidence" value="ECO:0007669"/>
    <property type="project" value="UniProtKB-UniRule"/>
</dbReference>
<dbReference type="GO" id="GO:0000049">
    <property type="term" value="F:tRNA binding"/>
    <property type="evidence" value="ECO:0007669"/>
    <property type="project" value="InterPro"/>
</dbReference>
<dbReference type="GO" id="GO:0008270">
    <property type="term" value="F:zinc ion binding"/>
    <property type="evidence" value="ECO:0007669"/>
    <property type="project" value="InterPro"/>
</dbReference>
<dbReference type="GO" id="GO:0006424">
    <property type="term" value="P:glutamyl-tRNA aminoacylation"/>
    <property type="evidence" value="ECO:0007669"/>
    <property type="project" value="UniProtKB-UniRule"/>
</dbReference>
<dbReference type="CDD" id="cd00808">
    <property type="entry name" value="GluRS_core"/>
    <property type="match status" value="1"/>
</dbReference>
<dbReference type="FunFam" id="3.40.50.620:FF:000149">
    <property type="entry name" value="Glutamate--tRNA ligase"/>
    <property type="match status" value="1"/>
</dbReference>
<dbReference type="Gene3D" id="1.10.10.350">
    <property type="match status" value="1"/>
</dbReference>
<dbReference type="Gene3D" id="1.10.8.70">
    <property type="entry name" value="Glutamate-tRNA synthetase, class I, anticodon-binding domain 1"/>
    <property type="match status" value="1"/>
</dbReference>
<dbReference type="Gene3D" id="1.10.1160.10">
    <property type="entry name" value="Glutamyl-trna Synthetase, Domain 2"/>
    <property type="match status" value="1"/>
</dbReference>
<dbReference type="Gene3D" id="3.90.800.10">
    <property type="entry name" value="Glutamyl-tRNA Synthetase, Domain 3"/>
    <property type="match status" value="1"/>
</dbReference>
<dbReference type="Gene3D" id="3.40.50.620">
    <property type="entry name" value="HUPs"/>
    <property type="match status" value="1"/>
</dbReference>
<dbReference type="HAMAP" id="MF_00022">
    <property type="entry name" value="Glu_tRNA_synth_type1"/>
    <property type="match status" value="1"/>
</dbReference>
<dbReference type="InterPro" id="IPR045462">
    <property type="entry name" value="aa-tRNA-synth_I_cd-bd"/>
</dbReference>
<dbReference type="InterPro" id="IPR020751">
    <property type="entry name" value="aa-tRNA-synth_I_codon-bd_sub2"/>
</dbReference>
<dbReference type="InterPro" id="IPR008925">
    <property type="entry name" value="aa_tRNA-synth_I_cd-bd_sf"/>
</dbReference>
<dbReference type="InterPro" id="IPR004527">
    <property type="entry name" value="Glu-tRNA-ligase_bac/mito"/>
</dbReference>
<dbReference type="InterPro" id="IPR020752">
    <property type="entry name" value="Glu-tRNA-synth_I_codon-bd_sub1"/>
</dbReference>
<dbReference type="InterPro" id="IPR000924">
    <property type="entry name" value="Glu/Gln-tRNA-synth"/>
</dbReference>
<dbReference type="InterPro" id="IPR020058">
    <property type="entry name" value="Glu/Gln-tRNA-synth_Ib_cat-dom"/>
</dbReference>
<dbReference type="InterPro" id="IPR020061">
    <property type="entry name" value="Glu_tRNA_lig_a-bdl"/>
</dbReference>
<dbReference type="InterPro" id="IPR049940">
    <property type="entry name" value="GluQ/Sye"/>
</dbReference>
<dbReference type="InterPro" id="IPR033910">
    <property type="entry name" value="GluRS_core"/>
</dbReference>
<dbReference type="InterPro" id="IPR014729">
    <property type="entry name" value="Rossmann-like_a/b/a_fold"/>
</dbReference>
<dbReference type="NCBIfam" id="TIGR00464">
    <property type="entry name" value="gltX_bact"/>
    <property type="match status" value="1"/>
</dbReference>
<dbReference type="PANTHER" id="PTHR43311">
    <property type="entry name" value="GLUTAMATE--TRNA LIGASE"/>
    <property type="match status" value="1"/>
</dbReference>
<dbReference type="PANTHER" id="PTHR43311:SF2">
    <property type="entry name" value="GLUTAMATE--TRNA LIGASE, MITOCHONDRIAL-RELATED"/>
    <property type="match status" value="1"/>
</dbReference>
<dbReference type="Pfam" id="PF19269">
    <property type="entry name" value="Anticodon_2"/>
    <property type="match status" value="1"/>
</dbReference>
<dbReference type="Pfam" id="PF00749">
    <property type="entry name" value="tRNA-synt_1c"/>
    <property type="match status" value="1"/>
</dbReference>
<dbReference type="PRINTS" id="PR00987">
    <property type="entry name" value="TRNASYNTHGLU"/>
</dbReference>
<dbReference type="SUPFAM" id="SSF48163">
    <property type="entry name" value="An anticodon-binding domain of class I aminoacyl-tRNA synthetases"/>
    <property type="match status" value="1"/>
</dbReference>
<dbReference type="SUPFAM" id="SSF52374">
    <property type="entry name" value="Nucleotidylyl transferase"/>
    <property type="match status" value="1"/>
</dbReference>